<feature type="chain" id="PRO_0000256359" description="Chorismate synthase">
    <location>
        <begin position="1"/>
        <end position="358"/>
    </location>
</feature>
<feature type="binding site" evidence="1">
    <location>
        <position position="46"/>
    </location>
    <ligand>
        <name>NADP(+)</name>
        <dbReference type="ChEBI" id="CHEBI:58349"/>
    </ligand>
</feature>
<feature type="binding site" evidence="1">
    <location>
        <begin position="123"/>
        <end position="125"/>
    </location>
    <ligand>
        <name>FMN</name>
        <dbReference type="ChEBI" id="CHEBI:58210"/>
    </ligand>
</feature>
<feature type="binding site" evidence="1">
    <location>
        <begin position="235"/>
        <end position="236"/>
    </location>
    <ligand>
        <name>FMN</name>
        <dbReference type="ChEBI" id="CHEBI:58210"/>
    </ligand>
</feature>
<feature type="binding site" evidence="1">
    <location>
        <position position="275"/>
    </location>
    <ligand>
        <name>FMN</name>
        <dbReference type="ChEBI" id="CHEBI:58210"/>
    </ligand>
</feature>
<feature type="binding site" evidence="1">
    <location>
        <begin position="290"/>
        <end position="294"/>
    </location>
    <ligand>
        <name>FMN</name>
        <dbReference type="ChEBI" id="CHEBI:58210"/>
    </ligand>
</feature>
<feature type="binding site" evidence="1">
    <location>
        <position position="316"/>
    </location>
    <ligand>
        <name>FMN</name>
        <dbReference type="ChEBI" id="CHEBI:58210"/>
    </ligand>
</feature>
<keyword id="KW-0028">Amino-acid biosynthesis</keyword>
<keyword id="KW-0057">Aromatic amino acid biosynthesis</keyword>
<keyword id="KW-0274">FAD</keyword>
<keyword id="KW-0285">Flavoprotein</keyword>
<keyword id="KW-0288">FMN</keyword>
<keyword id="KW-0456">Lyase</keyword>
<keyword id="KW-0521">NADP</keyword>
<keyword id="KW-1185">Reference proteome</keyword>
<name>AROC_SULDN</name>
<proteinExistence type="inferred from homology"/>
<dbReference type="EC" id="4.2.3.5" evidence="1"/>
<dbReference type="EMBL" id="CP000153">
    <property type="protein sequence ID" value="ABB45297.1"/>
    <property type="molecule type" value="Genomic_DNA"/>
</dbReference>
<dbReference type="RefSeq" id="WP_011373637.1">
    <property type="nucleotide sequence ID" value="NC_007575.1"/>
</dbReference>
<dbReference type="SMR" id="Q30NY4"/>
<dbReference type="STRING" id="326298.Suden_2023"/>
<dbReference type="KEGG" id="tdn:Suden_2023"/>
<dbReference type="eggNOG" id="COG0082">
    <property type="taxonomic scope" value="Bacteria"/>
</dbReference>
<dbReference type="HOGENOM" id="CLU_034547_0_2_7"/>
<dbReference type="OrthoDB" id="9771806at2"/>
<dbReference type="UniPathway" id="UPA00053">
    <property type="reaction ID" value="UER00090"/>
</dbReference>
<dbReference type="Proteomes" id="UP000002714">
    <property type="component" value="Chromosome"/>
</dbReference>
<dbReference type="GO" id="GO:0005829">
    <property type="term" value="C:cytosol"/>
    <property type="evidence" value="ECO:0007669"/>
    <property type="project" value="TreeGrafter"/>
</dbReference>
<dbReference type="GO" id="GO:0004107">
    <property type="term" value="F:chorismate synthase activity"/>
    <property type="evidence" value="ECO:0007669"/>
    <property type="project" value="UniProtKB-UniRule"/>
</dbReference>
<dbReference type="GO" id="GO:0010181">
    <property type="term" value="F:FMN binding"/>
    <property type="evidence" value="ECO:0007669"/>
    <property type="project" value="TreeGrafter"/>
</dbReference>
<dbReference type="GO" id="GO:0008652">
    <property type="term" value="P:amino acid biosynthetic process"/>
    <property type="evidence" value="ECO:0007669"/>
    <property type="project" value="UniProtKB-KW"/>
</dbReference>
<dbReference type="GO" id="GO:0009073">
    <property type="term" value="P:aromatic amino acid family biosynthetic process"/>
    <property type="evidence" value="ECO:0007669"/>
    <property type="project" value="UniProtKB-KW"/>
</dbReference>
<dbReference type="GO" id="GO:0009423">
    <property type="term" value="P:chorismate biosynthetic process"/>
    <property type="evidence" value="ECO:0007669"/>
    <property type="project" value="UniProtKB-UniRule"/>
</dbReference>
<dbReference type="CDD" id="cd07304">
    <property type="entry name" value="Chorismate_synthase"/>
    <property type="match status" value="1"/>
</dbReference>
<dbReference type="Gene3D" id="3.60.150.10">
    <property type="entry name" value="Chorismate synthase AroC"/>
    <property type="match status" value="1"/>
</dbReference>
<dbReference type="HAMAP" id="MF_00300">
    <property type="entry name" value="Chorismate_synth"/>
    <property type="match status" value="1"/>
</dbReference>
<dbReference type="InterPro" id="IPR000453">
    <property type="entry name" value="Chorismate_synth"/>
</dbReference>
<dbReference type="InterPro" id="IPR035904">
    <property type="entry name" value="Chorismate_synth_AroC_sf"/>
</dbReference>
<dbReference type="InterPro" id="IPR020541">
    <property type="entry name" value="Chorismate_synthase_CS"/>
</dbReference>
<dbReference type="NCBIfam" id="TIGR00033">
    <property type="entry name" value="aroC"/>
    <property type="match status" value="1"/>
</dbReference>
<dbReference type="NCBIfam" id="NF003793">
    <property type="entry name" value="PRK05382.1"/>
    <property type="match status" value="1"/>
</dbReference>
<dbReference type="PANTHER" id="PTHR21085">
    <property type="entry name" value="CHORISMATE SYNTHASE"/>
    <property type="match status" value="1"/>
</dbReference>
<dbReference type="PANTHER" id="PTHR21085:SF0">
    <property type="entry name" value="CHORISMATE SYNTHASE"/>
    <property type="match status" value="1"/>
</dbReference>
<dbReference type="Pfam" id="PF01264">
    <property type="entry name" value="Chorismate_synt"/>
    <property type="match status" value="1"/>
</dbReference>
<dbReference type="PIRSF" id="PIRSF001456">
    <property type="entry name" value="Chorismate_synth"/>
    <property type="match status" value="1"/>
</dbReference>
<dbReference type="SUPFAM" id="SSF103263">
    <property type="entry name" value="Chorismate synthase, AroC"/>
    <property type="match status" value="1"/>
</dbReference>
<dbReference type="PROSITE" id="PS00787">
    <property type="entry name" value="CHORISMATE_SYNTHASE_1"/>
    <property type="match status" value="1"/>
</dbReference>
<dbReference type="PROSITE" id="PS00788">
    <property type="entry name" value="CHORISMATE_SYNTHASE_2"/>
    <property type="match status" value="1"/>
</dbReference>
<dbReference type="PROSITE" id="PS00789">
    <property type="entry name" value="CHORISMATE_SYNTHASE_3"/>
    <property type="match status" value="1"/>
</dbReference>
<accession>Q30NY4</accession>
<gene>
    <name evidence="1" type="primary">aroC</name>
    <name type="ordered locus">Suden_2023</name>
</gene>
<comment type="function">
    <text evidence="1">Catalyzes the anti-1,4-elimination of the C-3 phosphate and the C-6 proR hydrogen from 5-enolpyruvylshikimate-3-phosphate (EPSP) to yield chorismate, which is the branch point compound that serves as the starting substrate for the three terminal pathways of aromatic amino acid biosynthesis. This reaction introduces a second double bond into the aromatic ring system.</text>
</comment>
<comment type="catalytic activity">
    <reaction evidence="1">
        <text>5-O-(1-carboxyvinyl)-3-phosphoshikimate = chorismate + phosphate</text>
        <dbReference type="Rhea" id="RHEA:21020"/>
        <dbReference type="ChEBI" id="CHEBI:29748"/>
        <dbReference type="ChEBI" id="CHEBI:43474"/>
        <dbReference type="ChEBI" id="CHEBI:57701"/>
        <dbReference type="EC" id="4.2.3.5"/>
    </reaction>
</comment>
<comment type="cofactor">
    <cofactor evidence="1">
        <name>FMNH2</name>
        <dbReference type="ChEBI" id="CHEBI:57618"/>
    </cofactor>
    <text evidence="1">Reduced FMN (FMNH(2)).</text>
</comment>
<comment type="pathway">
    <text evidence="1">Metabolic intermediate biosynthesis; chorismate biosynthesis; chorismate from D-erythrose 4-phosphate and phosphoenolpyruvate: step 7/7.</text>
</comment>
<comment type="subunit">
    <text evidence="1">Homotetramer.</text>
</comment>
<comment type="similarity">
    <text evidence="1">Belongs to the chorismate synthase family.</text>
</comment>
<sequence>MNSFGIKFKISTFGESHGVAIGCLLDGVPAGLLIDEEFIQAELDRRKPGKSEFETARKEDDKVEILSGVFEGKSTGTPIAMIIYNTNQKSKDYSNIKDIFRPGHADFTYFHKYGLRDYRGGGRSSARETAARVAGGAVAKLMLKELGIEVQSGICEVDGIKSLEFDYESAKKSIIYALDSTKEEAQKEAILRAKNEHDSVGGVSRVLIKGVPVGLGQPLYYKMDAVLADAMMGINAVKAVEIGDGILSASLKGSINNDAIRADGFVTNHSGGILGGISNGEDIVMNVYFKPTPSIFKEQQTITCRDEEVDFSLKGRHDPCVAIRGTIVCEAMAALVIADMLLLNMGSEMSGVLTYYKK</sequence>
<reference key="1">
    <citation type="journal article" date="2008" name="Appl. Environ. Microbiol.">
        <title>Genome of the epsilonproteobacterial chemolithoautotroph Sulfurimonas denitrificans.</title>
        <authorList>
            <person name="Sievert S.M."/>
            <person name="Scott K.M."/>
            <person name="Klotz M.G."/>
            <person name="Chain P.S.G."/>
            <person name="Hauser L.J."/>
            <person name="Hemp J."/>
            <person name="Huegler M."/>
            <person name="Land M."/>
            <person name="Lapidus A."/>
            <person name="Larimer F.W."/>
            <person name="Lucas S."/>
            <person name="Malfatti S.A."/>
            <person name="Meyer F."/>
            <person name="Paulsen I.T."/>
            <person name="Ren Q."/>
            <person name="Simon J."/>
            <person name="Bailey K."/>
            <person name="Diaz E."/>
            <person name="Fitzpatrick K.A."/>
            <person name="Glover B."/>
            <person name="Gwatney N."/>
            <person name="Korajkic A."/>
            <person name="Long A."/>
            <person name="Mobberley J.M."/>
            <person name="Pantry S.N."/>
            <person name="Pazder G."/>
            <person name="Peterson S."/>
            <person name="Quintanilla J.D."/>
            <person name="Sprinkle R."/>
            <person name="Stephens J."/>
            <person name="Thomas P."/>
            <person name="Vaughn R."/>
            <person name="Weber M.J."/>
            <person name="Wooten L.L."/>
        </authorList>
    </citation>
    <scope>NUCLEOTIDE SEQUENCE [LARGE SCALE GENOMIC DNA]</scope>
    <source>
        <strain>ATCC 33889 / DSM 1251</strain>
    </source>
</reference>
<organism>
    <name type="scientific">Sulfurimonas denitrificans (strain ATCC 33889 / DSM 1251)</name>
    <name type="common">Thiomicrospira denitrificans (strain ATCC 33889 / DSM 1251)</name>
    <dbReference type="NCBI Taxonomy" id="326298"/>
    <lineage>
        <taxon>Bacteria</taxon>
        <taxon>Pseudomonadati</taxon>
        <taxon>Campylobacterota</taxon>
        <taxon>Epsilonproteobacteria</taxon>
        <taxon>Campylobacterales</taxon>
        <taxon>Sulfurimonadaceae</taxon>
        <taxon>Sulfurimonas</taxon>
    </lineage>
</organism>
<protein>
    <recommendedName>
        <fullName evidence="1">Chorismate synthase</fullName>
        <shortName evidence="1">CS</shortName>
        <ecNumber evidence="1">4.2.3.5</ecNumber>
    </recommendedName>
    <alternativeName>
        <fullName evidence="1">5-enolpyruvylshikimate-3-phosphate phospholyase</fullName>
    </alternativeName>
</protein>
<evidence type="ECO:0000255" key="1">
    <source>
        <dbReference type="HAMAP-Rule" id="MF_00300"/>
    </source>
</evidence>